<feature type="chain" id="PRO_0000219209" description="Leukocyte antigen CD37">
    <location>
        <begin position="1"/>
        <end position="281"/>
    </location>
</feature>
<feature type="topological domain" description="Cytoplasmic" evidence="2">
    <location>
        <begin position="1"/>
        <end position="17"/>
    </location>
</feature>
<feature type="transmembrane region" description="Helical" evidence="2">
    <location>
        <begin position="18"/>
        <end position="38"/>
    </location>
</feature>
<feature type="topological domain" description="Extracellular" evidence="2">
    <location>
        <begin position="39"/>
        <end position="59"/>
    </location>
</feature>
<feature type="transmembrane region" description="Helical" evidence="2">
    <location>
        <begin position="60"/>
        <end position="74"/>
    </location>
</feature>
<feature type="topological domain" description="Cytoplasmic" evidence="2">
    <location>
        <begin position="75"/>
        <end position="85"/>
    </location>
</feature>
<feature type="transmembrane region" description="Helical" evidence="2">
    <location>
        <begin position="86"/>
        <end position="111"/>
    </location>
</feature>
<feature type="topological domain" description="Extracellular" evidence="2">
    <location>
        <begin position="112"/>
        <end position="241"/>
    </location>
</feature>
<feature type="transmembrane region" description="Helical" evidence="2">
    <location>
        <begin position="242"/>
        <end position="266"/>
    </location>
</feature>
<feature type="topological domain" description="Cytoplasmic" evidence="2">
    <location>
        <begin position="267"/>
        <end position="281"/>
    </location>
</feature>
<feature type="glycosylation site" description="N-linked (GlcNAc...) asparagine" evidence="2">
    <location>
        <position position="170"/>
    </location>
</feature>
<feature type="glycosylation site" description="N-linked (GlcNAc...) asparagine" evidence="2">
    <location>
        <position position="183"/>
    </location>
</feature>
<feature type="glycosylation site" description="N-linked (GlcNAc...) asparagine" evidence="2">
    <location>
        <position position="188"/>
    </location>
</feature>
<feature type="splice variant" id="VSP_047228" description="In isoform 2 and isoform 3." evidence="7">
    <location>
        <begin position="1"/>
        <end position="68"/>
    </location>
</feature>
<feature type="splice variant" id="VSP_047229" description="In isoform 3." evidence="7">
    <original>LGFMTLSIFLCRNLDHVYNRLARYR</original>
    <variation>VIWPRPHPRSALNP</variation>
    <location>
        <begin position="257"/>
        <end position="281"/>
    </location>
</feature>
<feature type="mutagenesis site" description="Complete loss of surface expression." evidence="5">
    <original>Y</original>
    <variation>F</variation>
    <location>
        <position position="13"/>
    </location>
</feature>
<feature type="mutagenesis site" description="No loss of surface expression but significant increase of CD37-mediated cell death." evidence="5">
    <original>Y</original>
    <variation>F</variation>
    <location>
        <position position="274"/>
    </location>
</feature>
<accession>P11049</accession>
<accession>B4DVC1</accession>
<accession>Q3KPF9</accession>
<organism>
    <name type="scientific">Homo sapiens</name>
    <name type="common">Human</name>
    <dbReference type="NCBI Taxonomy" id="9606"/>
    <lineage>
        <taxon>Eukaryota</taxon>
        <taxon>Metazoa</taxon>
        <taxon>Chordata</taxon>
        <taxon>Craniata</taxon>
        <taxon>Vertebrata</taxon>
        <taxon>Euteleostomi</taxon>
        <taxon>Mammalia</taxon>
        <taxon>Eutheria</taxon>
        <taxon>Euarchontoglires</taxon>
        <taxon>Primates</taxon>
        <taxon>Haplorrhini</taxon>
        <taxon>Catarrhini</taxon>
        <taxon>Hominidae</taxon>
        <taxon>Homo</taxon>
    </lineage>
</organism>
<name>CD37_HUMAN</name>
<evidence type="ECO:0000250" key="1">
    <source>
        <dbReference type="UniProtKB" id="Q61451"/>
    </source>
</evidence>
<evidence type="ECO:0000255" key="2"/>
<evidence type="ECO:0000269" key="3">
    <source>
    </source>
</evidence>
<evidence type="ECO:0000269" key="4">
    <source>
    </source>
</evidence>
<evidence type="ECO:0000269" key="5">
    <source>
    </source>
</evidence>
<evidence type="ECO:0000269" key="6">
    <source>
    </source>
</evidence>
<evidence type="ECO:0000303" key="7">
    <source>
    </source>
</evidence>
<evidence type="ECO:0000305" key="8"/>
<sequence>MSAQESCLSLIKYFLFVFNLFFFVLGSLIFCFGIWILIDKTSFVSFVGLAFVPLQIWSKVLAISGIFTMGIALLGCVGALKELRCLLGLYFGMLLLLFATQITLGILISTQRAQLERSLRDVVEKTIQKYGTNPEETAAEESWDYVQFQLRCCGWHYPQDWFQVLILRGNGSEAHRVPCSCYNLSATNDSTILDKVILPQLSRLGHLARSRHSADICAVPAESHIYREGCAQGLQKWLHNNLISIVGICLGVGLLELGFMTLSIFLCRNLDHVYNRLARYR</sequence>
<protein>
    <recommendedName>
        <fullName>Leukocyte antigen CD37</fullName>
    </recommendedName>
    <alternativeName>
        <fullName>Tetraspanin-26</fullName>
        <shortName>Tspan-26</shortName>
    </alternativeName>
    <cdAntigenName>CD37</cdAntigenName>
</protein>
<keyword id="KW-0025">Alternative splicing</keyword>
<keyword id="KW-1003">Cell membrane</keyword>
<keyword id="KW-0325">Glycoprotein</keyword>
<keyword id="KW-0472">Membrane</keyword>
<keyword id="KW-1267">Proteomics identification</keyword>
<keyword id="KW-1185">Reference proteome</keyword>
<keyword id="KW-0812">Transmembrane</keyword>
<keyword id="KW-1133">Transmembrane helix</keyword>
<dbReference type="EMBL" id="X14046">
    <property type="protein sequence ID" value="CAA32204.1"/>
    <property type="molecule type" value="mRNA"/>
</dbReference>
<dbReference type="EMBL" id="AK301016">
    <property type="protein sequence ID" value="BAG62633.1"/>
    <property type="molecule type" value="mRNA"/>
</dbReference>
<dbReference type="EMBL" id="CR541877">
    <property type="protein sequence ID" value="CAG46675.1"/>
    <property type="molecule type" value="mRNA"/>
</dbReference>
<dbReference type="EMBL" id="BT019851">
    <property type="protein sequence ID" value="AAV38654.1"/>
    <property type="molecule type" value="mRNA"/>
</dbReference>
<dbReference type="EMBL" id="AC010524">
    <property type="status" value="NOT_ANNOTATED_CDS"/>
    <property type="molecule type" value="Genomic_DNA"/>
</dbReference>
<dbReference type="EMBL" id="AC011450">
    <property type="status" value="NOT_ANNOTATED_CDS"/>
    <property type="molecule type" value="Genomic_DNA"/>
</dbReference>
<dbReference type="EMBL" id="BC106752">
    <property type="protein sequence ID" value="AAI06753.1"/>
    <property type="molecule type" value="mRNA"/>
</dbReference>
<dbReference type="EMBL" id="BC110379">
    <property type="protein sequence ID" value="AAI10380.1"/>
    <property type="molecule type" value="mRNA"/>
</dbReference>
<dbReference type="CCDS" id="CCDS12760.1">
    <molecule id="P11049-1"/>
</dbReference>
<dbReference type="CCDS" id="CCDS46139.1">
    <molecule id="P11049-2"/>
</dbReference>
<dbReference type="PIR" id="A47629">
    <property type="entry name" value="A47629"/>
</dbReference>
<dbReference type="RefSeq" id="NP_001035120.1">
    <molecule id="P11049-2"/>
    <property type="nucleotide sequence ID" value="NM_001040031.2"/>
</dbReference>
<dbReference type="RefSeq" id="NP_001765.1">
    <molecule id="P11049-1"/>
    <property type="nucleotide sequence ID" value="NM_001774.3"/>
</dbReference>
<dbReference type="RefSeq" id="XP_011525846.1">
    <property type="nucleotide sequence ID" value="XM_011527544.2"/>
</dbReference>
<dbReference type="RefSeq" id="XP_016883002.1">
    <property type="nucleotide sequence ID" value="XM_017027513.1"/>
</dbReference>
<dbReference type="RefSeq" id="XP_054178689.1">
    <molecule id="P11049-2"/>
    <property type="nucleotide sequence ID" value="XM_054322714.1"/>
</dbReference>
<dbReference type="SMR" id="P11049"/>
<dbReference type="BioGRID" id="107389">
    <property type="interactions" value="8"/>
</dbReference>
<dbReference type="FunCoup" id="P11049">
    <property type="interactions" value="169"/>
</dbReference>
<dbReference type="IntAct" id="P11049">
    <property type="interactions" value="14"/>
</dbReference>
<dbReference type="MINT" id="P11049"/>
<dbReference type="STRING" id="9606.ENSP00000325708"/>
<dbReference type="ChEMBL" id="CHEMBL3712880"/>
<dbReference type="DrugBank" id="DB16275">
    <property type="generic name" value="Otlertuzumab"/>
</dbReference>
<dbReference type="GuidetoPHARMACOLOGY" id="3010"/>
<dbReference type="GlyCosmos" id="P11049">
    <property type="glycosylation" value="3 sites, No reported glycans"/>
</dbReference>
<dbReference type="GlyGen" id="P11049">
    <property type="glycosylation" value="3 sites"/>
</dbReference>
<dbReference type="iPTMnet" id="P11049"/>
<dbReference type="PhosphoSitePlus" id="P11049"/>
<dbReference type="SwissPalm" id="P11049"/>
<dbReference type="BioMuta" id="CD37"/>
<dbReference type="DMDM" id="115983"/>
<dbReference type="MassIVE" id="P11049"/>
<dbReference type="PaxDb" id="9606-ENSP00000325708"/>
<dbReference type="PeptideAtlas" id="P11049"/>
<dbReference type="ProteomicsDB" id="52690">
    <molecule id="P11049-1"/>
</dbReference>
<dbReference type="ABCD" id="P11049">
    <property type="antibodies" value="26 sequenced antibodies"/>
</dbReference>
<dbReference type="Antibodypedia" id="3735">
    <property type="antibodies" value="746 antibodies from 38 providers"/>
</dbReference>
<dbReference type="DNASU" id="951"/>
<dbReference type="Ensembl" id="ENST00000323906.9">
    <molecule id="P11049-1"/>
    <property type="protein sequence ID" value="ENSP00000325708.3"/>
    <property type="gene ID" value="ENSG00000104894.12"/>
</dbReference>
<dbReference type="Ensembl" id="ENST00000426897.6">
    <molecule id="P11049-2"/>
    <property type="protein sequence ID" value="ENSP00000413151.1"/>
    <property type="gene ID" value="ENSG00000104894.12"/>
</dbReference>
<dbReference type="Ensembl" id="ENST00000598095.5">
    <molecule id="P11049-3"/>
    <property type="protein sequence ID" value="ENSP00000470394.1"/>
    <property type="gene ID" value="ENSG00000104894.12"/>
</dbReference>
<dbReference type="GeneID" id="951"/>
<dbReference type="KEGG" id="hsa:951"/>
<dbReference type="MANE-Select" id="ENST00000323906.9">
    <property type="protein sequence ID" value="ENSP00000325708.3"/>
    <property type="RefSeq nucleotide sequence ID" value="NM_001774.3"/>
    <property type="RefSeq protein sequence ID" value="NP_001765.1"/>
</dbReference>
<dbReference type="UCSC" id="uc002pnd.4">
    <molecule id="P11049-1"/>
    <property type="organism name" value="human"/>
</dbReference>
<dbReference type="AGR" id="HGNC:1666"/>
<dbReference type="CTD" id="951"/>
<dbReference type="DisGeNET" id="951"/>
<dbReference type="GeneCards" id="CD37"/>
<dbReference type="HGNC" id="HGNC:1666">
    <property type="gene designation" value="CD37"/>
</dbReference>
<dbReference type="HPA" id="ENSG00000104894">
    <property type="expression patterns" value="Tissue enhanced (bone marrow, intestine, lymphoid tissue)"/>
</dbReference>
<dbReference type="MIM" id="151523">
    <property type="type" value="gene"/>
</dbReference>
<dbReference type="neXtProt" id="NX_P11049"/>
<dbReference type="OpenTargets" id="ENSG00000104894"/>
<dbReference type="PharmGKB" id="PA26213"/>
<dbReference type="VEuPathDB" id="HostDB:ENSG00000104894"/>
<dbReference type="eggNOG" id="KOG3882">
    <property type="taxonomic scope" value="Eukaryota"/>
</dbReference>
<dbReference type="GeneTree" id="ENSGT00940000161485"/>
<dbReference type="HOGENOM" id="CLU_055524_10_1_1"/>
<dbReference type="InParanoid" id="P11049"/>
<dbReference type="OMA" id="MCRNLDY"/>
<dbReference type="OrthoDB" id="438211at2759"/>
<dbReference type="PAN-GO" id="P11049">
    <property type="GO annotations" value="1 GO annotation based on evolutionary models"/>
</dbReference>
<dbReference type="PhylomeDB" id="P11049"/>
<dbReference type="TreeFam" id="TF352892"/>
<dbReference type="PathwayCommons" id="P11049"/>
<dbReference type="SignaLink" id="P11049"/>
<dbReference type="BioGRID-ORCS" id="951">
    <property type="hits" value="12 hits in 1157 CRISPR screens"/>
</dbReference>
<dbReference type="ChiTaRS" id="CD37">
    <property type="organism name" value="human"/>
</dbReference>
<dbReference type="GeneWiki" id="CD37"/>
<dbReference type="GenomeRNAi" id="951"/>
<dbReference type="Pharos" id="P11049">
    <property type="development level" value="Tbio"/>
</dbReference>
<dbReference type="PRO" id="PR:P11049"/>
<dbReference type="Proteomes" id="UP000005640">
    <property type="component" value="Chromosome 19"/>
</dbReference>
<dbReference type="RNAct" id="P11049">
    <property type="molecule type" value="protein"/>
</dbReference>
<dbReference type="Bgee" id="ENSG00000104894">
    <property type="expression patterns" value="Expressed in granulocyte and 119 other cell types or tissues"/>
</dbReference>
<dbReference type="ExpressionAtlas" id="P11049">
    <property type="expression patterns" value="baseline and differential"/>
</dbReference>
<dbReference type="GO" id="GO:0070062">
    <property type="term" value="C:extracellular exosome"/>
    <property type="evidence" value="ECO:0007005"/>
    <property type="project" value="UniProtKB"/>
</dbReference>
<dbReference type="GO" id="GO:0001772">
    <property type="term" value="C:immunological synapse"/>
    <property type="evidence" value="ECO:0000314"/>
    <property type="project" value="UniProtKB"/>
</dbReference>
<dbReference type="GO" id="GO:0016020">
    <property type="term" value="C:membrane"/>
    <property type="evidence" value="ECO:0007005"/>
    <property type="project" value="UniProtKB"/>
</dbReference>
<dbReference type="GO" id="GO:0005886">
    <property type="term" value="C:plasma membrane"/>
    <property type="evidence" value="ECO:0000318"/>
    <property type="project" value="GO_Central"/>
</dbReference>
<dbReference type="GO" id="GO:0042832">
    <property type="term" value="P:defense response to protozoan"/>
    <property type="evidence" value="ECO:0007669"/>
    <property type="project" value="Ensembl"/>
</dbReference>
<dbReference type="GO" id="GO:0030886">
    <property type="term" value="P:negative regulation of myeloid dendritic cell activation"/>
    <property type="evidence" value="ECO:0007669"/>
    <property type="project" value="Ensembl"/>
</dbReference>
<dbReference type="GO" id="GO:0042130">
    <property type="term" value="P:negative regulation of T cell proliferation"/>
    <property type="evidence" value="ECO:0007669"/>
    <property type="project" value="Ensembl"/>
</dbReference>
<dbReference type="GO" id="GO:0002639">
    <property type="term" value="P:positive regulation of immunoglobulin production"/>
    <property type="evidence" value="ECO:0007669"/>
    <property type="project" value="Ensembl"/>
</dbReference>
<dbReference type="GO" id="GO:0050688">
    <property type="term" value="P:regulation of defense response to virus"/>
    <property type="evidence" value="ECO:0007669"/>
    <property type="project" value="Ensembl"/>
</dbReference>
<dbReference type="GO" id="GO:0002920">
    <property type="term" value="P:regulation of humoral immune response"/>
    <property type="evidence" value="ECO:0007669"/>
    <property type="project" value="Ensembl"/>
</dbReference>
<dbReference type="GO" id="GO:0042098">
    <property type="term" value="P:T cell proliferation"/>
    <property type="evidence" value="ECO:0007669"/>
    <property type="project" value="Ensembl"/>
</dbReference>
<dbReference type="CDD" id="cd03160">
    <property type="entry name" value="CD37_CD82_like_LEL"/>
    <property type="match status" value="1"/>
</dbReference>
<dbReference type="FunFam" id="1.10.1450.10:FF:000018">
    <property type="entry name" value="Tetraspanin"/>
    <property type="match status" value="1"/>
</dbReference>
<dbReference type="Gene3D" id="1.10.1450.10">
    <property type="entry name" value="Tetraspanin"/>
    <property type="match status" value="1"/>
</dbReference>
<dbReference type="InterPro" id="IPR018499">
    <property type="entry name" value="Tetraspanin/Peripherin"/>
</dbReference>
<dbReference type="InterPro" id="IPR000301">
    <property type="entry name" value="Tetraspanin_animals"/>
</dbReference>
<dbReference type="InterPro" id="IPR018503">
    <property type="entry name" value="Tetraspanin_CS"/>
</dbReference>
<dbReference type="InterPro" id="IPR008952">
    <property type="entry name" value="Tetraspanin_EC2_sf"/>
</dbReference>
<dbReference type="PANTHER" id="PTHR19282:SF263">
    <property type="entry name" value="LEUKOCYTE ANTIGEN CD37"/>
    <property type="match status" value="1"/>
</dbReference>
<dbReference type="PANTHER" id="PTHR19282">
    <property type="entry name" value="TETRASPANIN"/>
    <property type="match status" value="1"/>
</dbReference>
<dbReference type="Pfam" id="PF00335">
    <property type="entry name" value="Tetraspanin"/>
    <property type="match status" value="1"/>
</dbReference>
<dbReference type="PIRSF" id="PIRSF002419">
    <property type="entry name" value="Tetraspanin"/>
    <property type="match status" value="1"/>
</dbReference>
<dbReference type="PRINTS" id="PR00259">
    <property type="entry name" value="TMFOUR"/>
</dbReference>
<dbReference type="SUPFAM" id="SSF48652">
    <property type="entry name" value="Tetraspanin"/>
    <property type="match status" value="1"/>
</dbReference>
<dbReference type="PROSITE" id="PS00421">
    <property type="entry name" value="TM4_1"/>
    <property type="match status" value="1"/>
</dbReference>
<proteinExistence type="evidence at protein level"/>
<comment type="function">
    <text evidence="1 3 5 6">Structural component of specialized membrane microdomains known as tetraspanin-enriched microdomains (TERMs), which act as platforms for receptor clustering and signaling. Participates thereby in diverse biological functions such as cell signal transduction, adhesion, migration and protein trafficking (PubMed:22624718). Upon ligand binding, two signaling pathways are activated, one acting through phosphorylation by LYN leading to cell death or a survival pathway with activation of GSK3B (PubMed:22624718). Plays an essential role essential for clustering of integrin ITGA4/ITGB1 and promotes its mobility in the plasma membrane of B-cells. In turn, participates in ITGA4/ITGB1 integrin-mediated antiapoptotic signaling through AKT (By similarity). Also plays a role in the migration of dendritic cells and neutrophils to draining lymph nodes, as well as in their integrin-mediated adhesion (By similarity). Negatively regulates IL-6 responses through direct interaction with SOCS3 thereby preventing constitutive IL-6 signaling (PubMed:26784544). Alternatively, inhibition of IL-6 signaling can also occur via interaction and stabilization of DECTIN1/CLEC7A at the cell membrane to inhibit its ability to promote the production of IL-6 (PubMed:17182550).</text>
</comment>
<comment type="subunit">
    <text evidence="3 4 6">Interacts with SCIMP (PubMed:21930792). Interacts with SOCS3 (PubMed:26784544). Interacts with DECTIN1/CLEC7A (PubMed:17182550).</text>
</comment>
<comment type="interaction">
    <interactant intactId="EBI-6139068">
        <id>P11049</id>
    </interactant>
    <interactant intactId="EBI-6657396">
        <id>P19397</id>
        <label>CD53</label>
    </interactant>
    <organismsDiffer>false</organismsDiffer>
    <experiments>3</experiments>
</comment>
<comment type="interaction">
    <interactant intactId="EBI-6139068">
        <id>P11049</id>
    </interactant>
    <interactant intactId="EBI-4319440">
        <id>P54849</id>
        <label>EMP1</label>
    </interactant>
    <organismsDiffer>false</organismsDiffer>
    <experiments>3</experiments>
</comment>
<comment type="interaction">
    <interactant intactId="EBI-6139068">
        <id>P11049</id>
    </interactant>
    <interactant intactId="EBI-17565645">
        <id>P08034</id>
        <label>GJB1</label>
    </interactant>
    <organismsDiffer>false</organismsDiffer>
    <experiments>3</experiments>
</comment>
<comment type="interaction">
    <interactant intactId="EBI-6139068">
        <id>P11049</id>
    </interactant>
    <interactant intactId="EBI-2820517">
        <id>Q8TAF8</id>
        <label>LHFPL5</label>
    </interactant>
    <organismsDiffer>false</organismsDiffer>
    <experiments>3</experiments>
</comment>
<comment type="interaction">
    <interactant intactId="EBI-6139068">
        <id>P11049</id>
    </interactant>
    <interactant intactId="EBI-17775622">
        <id>Q96PB8</id>
        <label>LRRC3B</label>
    </interactant>
    <organismsDiffer>false</organismsDiffer>
    <experiments>3</experiments>
</comment>
<comment type="interaction">
    <interactant intactId="EBI-6139068">
        <id>P11049</id>
    </interactant>
    <interactant intactId="EBI-79452">
        <id>P07948</id>
        <label>LYN</label>
    </interactant>
    <organismsDiffer>false</organismsDiffer>
    <experiments>5</experiments>
</comment>
<comment type="interaction">
    <interactant intactId="EBI-6139068">
        <id>P11049</id>
    </interactant>
    <interactant intactId="EBI-78260">
        <id>P29350</id>
        <label>PTPN6</label>
    </interactant>
    <organismsDiffer>false</organismsDiffer>
    <experiments>4</experiments>
</comment>
<comment type="interaction">
    <interactant intactId="EBI-6139068">
        <id>P11049</id>
    </interactant>
    <interactant intactId="EBI-78302">
        <id>P43405</id>
        <label>SYK</label>
    </interactant>
    <organismsDiffer>false</organismsDiffer>
    <experiments>3</experiments>
</comment>
<comment type="subcellular location">
    <subcellularLocation>
        <location evidence="3 5 6">Cell membrane</location>
        <topology>Multi-pass membrane protein</topology>
    </subcellularLocation>
</comment>
<comment type="alternative products">
    <event type="alternative splicing"/>
    <isoform>
        <id>P11049-1</id>
        <name>1</name>
        <sequence type="displayed"/>
    </isoform>
    <isoform>
        <id>P11049-2</id>
        <name>2</name>
        <sequence type="described" ref="VSP_047228"/>
    </isoform>
    <isoform>
        <id>P11049-3</id>
        <name>3</name>
        <sequence type="described" ref="VSP_047228 VSP_047229"/>
    </isoform>
</comment>
<comment type="tissue specificity">
    <text evidence="3 6">B-lymphocytes (PubMed:26784544). Antigen presenting cells (PubMed:17182550).</text>
</comment>
<comment type="PTM">
    <text evidence="5">Tyrosine phosphorylated; leading to activation of downstream signaling pathways.</text>
</comment>
<comment type="similarity">
    <text evidence="8">Belongs to the tetraspanin (TM4SF) family.</text>
</comment>
<reference key="1">
    <citation type="journal article" date="1989" name="J. Exp. Med.">
        <title>The primary structure of the human leukocyte antigen CD37, a species homologue of the rat MRC OX-44 antigen.</title>
        <authorList>
            <person name="Classon B.J."/>
            <person name="Williams A.F."/>
            <person name="Willis A.C."/>
            <person name="Seed B."/>
            <person name="Stamenkovic I."/>
        </authorList>
    </citation>
    <scope>NUCLEOTIDE SEQUENCE [MRNA] (ISOFORM 1)</scope>
</reference>
<reference key="2">
    <citation type="journal article" date="1990" name="J. Exp. Med.">
        <authorList>
            <person name="Classon B.J."/>
            <person name="Williams A.F."/>
            <person name="Willis A.C."/>
            <person name="Seed B."/>
            <person name="Stamenkovic I."/>
        </authorList>
    </citation>
    <scope>ERRATUM OF PUBMED:2466944</scope>
    <scope>SEQUENCE REVISION</scope>
</reference>
<reference key="3">
    <citation type="journal article" date="2004" name="Nat. Genet.">
        <title>Complete sequencing and characterization of 21,243 full-length human cDNAs.</title>
        <authorList>
            <person name="Ota T."/>
            <person name="Suzuki Y."/>
            <person name="Nishikawa T."/>
            <person name="Otsuki T."/>
            <person name="Sugiyama T."/>
            <person name="Irie R."/>
            <person name="Wakamatsu A."/>
            <person name="Hayashi K."/>
            <person name="Sato H."/>
            <person name="Nagai K."/>
            <person name="Kimura K."/>
            <person name="Makita H."/>
            <person name="Sekine M."/>
            <person name="Obayashi M."/>
            <person name="Nishi T."/>
            <person name="Shibahara T."/>
            <person name="Tanaka T."/>
            <person name="Ishii S."/>
            <person name="Yamamoto J."/>
            <person name="Saito K."/>
            <person name="Kawai Y."/>
            <person name="Isono Y."/>
            <person name="Nakamura Y."/>
            <person name="Nagahari K."/>
            <person name="Murakami K."/>
            <person name="Yasuda T."/>
            <person name="Iwayanagi T."/>
            <person name="Wagatsuma M."/>
            <person name="Shiratori A."/>
            <person name="Sudo H."/>
            <person name="Hosoiri T."/>
            <person name="Kaku Y."/>
            <person name="Kodaira H."/>
            <person name="Kondo H."/>
            <person name="Sugawara M."/>
            <person name="Takahashi M."/>
            <person name="Kanda K."/>
            <person name="Yokoi T."/>
            <person name="Furuya T."/>
            <person name="Kikkawa E."/>
            <person name="Omura Y."/>
            <person name="Abe K."/>
            <person name="Kamihara K."/>
            <person name="Katsuta N."/>
            <person name="Sato K."/>
            <person name="Tanikawa M."/>
            <person name="Yamazaki M."/>
            <person name="Ninomiya K."/>
            <person name="Ishibashi T."/>
            <person name="Yamashita H."/>
            <person name="Murakawa K."/>
            <person name="Fujimori K."/>
            <person name="Tanai H."/>
            <person name="Kimata M."/>
            <person name="Watanabe M."/>
            <person name="Hiraoka S."/>
            <person name="Chiba Y."/>
            <person name="Ishida S."/>
            <person name="Ono Y."/>
            <person name="Takiguchi S."/>
            <person name="Watanabe S."/>
            <person name="Yosida M."/>
            <person name="Hotuta T."/>
            <person name="Kusano J."/>
            <person name="Kanehori K."/>
            <person name="Takahashi-Fujii A."/>
            <person name="Hara H."/>
            <person name="Tanase T.-O."/>
            <person name="Nomura Y."/>
            <person name="Togiya S."/>
            <person name="Komai F."/>
            <person name="Hara R."/>
            <person name="Takeuchi K."/>
            <person name="Arita M."/>
            <person name="Imose N."/>
            <person name="Musashino K."/>
            <person name="Yuuki H."/>
            <person name="Oshima A."/>
            <person name="Sasaki N."/>
            <person name="Aotsuka S."/>
            <person name="Yoshikawa Y."/>
            <person name="Matsunawa H."/>
            <person name="Ichihara T."/>
            <person name="Shiohata N."/>
            <person name="Sano S."/>
            <person name="Moriya S."/>
            <person name="Momiyama H."/>
            <person name="Satoh N."/>
            <person name="Takami S."/>
            <person name="Terashima Y."/>
            <person name="Suzuki O."/>
            <person name="Nakagawa S."/>
            <person name="Senoh A."/>
            <person name="Mizoguchi H."/>
            <person name="Goto Y."/>
            <person name="Shimizu F."/>
            <person name="Wakebe H."/>
            <person name="Hishigaki H."/>
            <person name="Watanabe T."/>
            <person name="Sugiyama A."/>
            <person name="Takemoto M."/>
            <person name="Kawakami B."/>
            <person name="Yamazaki M."/>
            <person name="Watanabe K."/>
            <person name="Kumagai A."/>
            <person name="Itakura S."/>
            <person name="Fukuzumi Y."/>
            <person name="Fujimori Y."/>
            <person name="Komiyama M."/>
            <person name="Tashiro H."/>
            <person name="Tanigami A."/>
            <person name="Fujiwara T."/>
            <person name="Ono T."/>
            <person name="Yamada K."/>
            <person name="Fujii Y."/>
            <person name="Ozaki K."/>
            <person name="Hirao M."/>
            <person name="Ohmori Y."/>
            <person name="Kawabata A."/>
            <person name="Hikiji T."/>
            <person name="Kobatake N."/>
            <person name="Inagaki H."/>
            <person name="Ikema Y."/>
            <person name="Okamoto S."/>
            <person name="Okitani R."/>
            <person name="Kawakami T."/>
            <person name="Noguchi S."/>
            <person name="Itoh T."/>
            <person name="Shigeta K."/>
            <person name="Senba T."/>
            <person name="Matsumura K."/>
            <person name="Nakajima Y."/>
            <person name="Mizuno T."/>
            <person name="Morinaga M."/>
            <person name="Sasaki M."/>
            <person name="Togashi T."/>
            <person name="Oyama M."/>
            <person name="Hata H."/>
            <person name="Watanabe M."/>
            <person name="Komatsu T."/>
            <person name="Mizushima-Sugano J."/>
            <person name="Satoh T."/>
            <person name="Shirai Y."/>
            <person name="Takahashi Y."/>
            <person name="Nakagawa K."/>
            <person name="Okumura K."/>
            <person name="Nagase T."/>
            <person name="Nomura N."/>
            <person name="Kikuchi H."/>
            <person name="Masuho Y."/>
            <person name="Yamashita R."/>
            <person name="Nakai K."/>
            <person name="Yada T."/>
            <person name="Nakamura Y."/>
            <person name="Ohara O."/>
            <person name="Isogai T."/>
            <person name="Sugano S."/>
        </authorList>
    </citation>
    <scope>NUCLEOTIDE SEQUENCE [LARGE SCALE MRNA] (ISOFORM 3)</scope>
</reference>
<reference key="4">
    <citation type="submission" date="2004-06" db="EMBL/GenBank/DDBJ databases">
        <title>Cloning of human full open reading frames in Gateway(TM) system entry vector (pDONR201).</title>
        <authorList>
            <person name="Halleck A."/>
            <person name="Ebert L."/>
            <person name="Mkoundinya M."/>
            <person name="Schick M."/>
            <person name="Eisenstein S."/>
            <person name="Neubert P."/>
            <person name="Kstrang K."/>
            <person name="Schatten R."/>
            <person name="Shen B."/>
            <person name="Henze S."/>
            <person name="Mar W."/>
            <person name="Korn B."/>
            <person name="Zuo D."/>
            <person name="Hu Y."/>
            <person name="LaBaer J."/>
        </authorList>
    </citation>
    <scope>NUCLEOTIDE SEQUENCE [LARGE SCALE MRNA] (ISOFORM 1)</scope>
</reference>
<reference key="5">
    <citation type="submission" date="2004-10" db="EMBL/GenBank/DDBJ databases">
        <title>Cloning of human full-length CDSs in BD Creator(TM) system donor vector.</title>
        <authorList>
            <person name="Kalnine N."/>
            <person name="Chen X."/>
            <person name="Rolfs A."/>
            <person name="Halleck A."/>
            <person name="Hines L."/>
            <person name="Eisenstein S."/>
            <person name="Koundinya M."/>
            <person name="Raphael J."/>
            <person name="Moreira D."/>
            <person name="Kelley T."/>
            <person name="LaBaer J."/>
            <person name="Lin Y."/>
            <person name="Phelan M."/>
            <person name="Farmer A."/>
        </authorList>
    </citation>
    <scope>NUCLEOTIDE SEQUENCE [LARGE SCALE MRNA] (ISOFORM 1)</scope>
</reference>
<reference key="6">
    <citation type="journal article" date="2004" name="Nature">
        <title>The DNA sequence and biology of human chromosome 19.</title>
        <authorList>
            <person name="Grimwood J."/>
            <person name="Gordon L.A."/>
            <person name="Olsen A.S."/>
            <person name="Terry A."/>
            <person name="Schmutz J."/>
            <person name="Lamerdin J.E."/>
            <person name="Hellsten U."/>
            <person name="Goodstein D."/>
            <person name="Couronne O."/>
            <person name="Tran-Gyamfi M."/>
            <person name="Aerts A."/>
            <person name="Altherr M."/>
            <person name="Ashworth L."/>
            <person name="Bajorek E."/>
            <person name="Black S."/>
            <person name="Branscomb E."/>
            <person name="Caenepeel S."/>
            <person name="Carrano A.V."/>
            <person name="Caoile C."/>
            <person name="Chan Y.M."/>
            <person name="Christensen M."/>
            <person name="Cleland C.A."/>
            <person name="Copeland A."/>
            <person name="Dalin E."/>
            <person name="Dehal P."/>
            <person name="Denys M."/>
            <person name="Detter J.C."/>
            <person name="Escobar J."/>
            <person name="Flowers D."/>
            <person name="Fotopulos D."/>
            <person name="Garcia C."/>
            <person name="Georgescu A.M."/>
            <person name="Glavina T."/>
            <person name="Gomez M."/>
            <person name="Gonzales E."/>
            <person name="Groza M."/>
            <person name="Hammon N."/>
            <person name="Hawkins T."/>
            <person name="Haydu L."/>
            <person name="Ho I."/>
            <person name="Huang W."/>
            <person name="Israni S."/>
            <person name="Jett J."/>
            <person name="Kadner K."/>
            <person name="Kimball H."/>
            <person name="Kobayashi A."/>
            <person name="Larionov V."/>
            <person name="Leem S.-H."/>
            <person name="Lopez F."/>
            <person name="Lou Y."/>
            <person name="Lowry S."/>
            <person name="Malfatti S."/>
            <person name="Martinez D."/>
            <person name="McCready P.M."/>
            <person name="Medina C."/>
            <person name="Morgan J."/>
            <person name="Nelson K."/>
            <person name="Nolan M."/>
            <person name="Ovcharenko I."/>
            <person name="Pitluck S."/>
            <person name="Pollard M."/>
            <person name="Popkie A.P."/>
            <person name="Predki P."/>
            <person name="Quan G."/>
            <person name="Ramirez L."/>
            <person name="Rash S."/>
            <person name="Retterer J."/>
            <person name="Rodriguez A."/>
            <person name="Rogers S."/>
            <person name="Salamov A."/>
            <person name="Salazar A."/>
            <person name="She X."/>
            <person name="Smith D."/>
            <person name="Slezak T."/>
            <person name="Solovyev V."/>
            <person name="Thayer N."/>
            <person name="Tice H."/>
            <person name="Tsai M."/>
            <person name="Ustaszewska A."/>
            <person name="Vo N."/>
            <person name="Wagner M."/>
            <person name="Wheeler J."/>
            <person name="Wu K."/>
            <person name="Xie G."/>
            <person name="Yang J."/>
            <person name="Dubchak I."/>
            <person name="Furey T.S."/>
            <person name="DeJong P."/>
            <person name="Dickson M."/>
            <person name="Gordon D."/>
            <person name="Eichler E.E."/>
            <person name="Pennacchio L.A."/>
            <person name="Richardson P."/>
            <person name="Stubbs L."/>
            <person name="Rokhsar D.S."/>
            <person name="Myers R.M."/>
            <person name="Rubin E.M."/>
            <person name="Lucas S.M."/>
        </authorList>
    </citation>
    <scope>NUCLEOTIDE SEQUENCE [LARGE SCALE GENOMIC DNA]</scope>
</reference>
<reference key="7">
    <citation type="journal article" date="2004" name="Genome Res.">
        <title>The status, quality, and expansion of the NIH full-length cDNA project: the Mammalian Gene Collection (MGC).</title>
        <authorList>
            <consortium name="The MGC Project Team"/>
        </authorList>
    </citation>
    <scope>NUCLEOTIDE SEQUENCE [LARGE SCALE MRNA] (ISOFORM 1)</scope>
</reference>
<reference key="8">
    <citation type="journal article" date="2007" name="J. Immunol.">
        <title>Dectin-1 interaction with tetraspanin CD37 inhibits IL-6 production.</title>
        <authorList>
            <person name="Meyer-Wentrup F."/>
            <person name="Figdor C.G."/>
            <person name="Ansems M."/>
            <person name="Brossart P."/>
            <person name="Wright M.D."/>
            <person name="Adema G.J."/>
            <person name="van Spriel A.B."/>
        </authorList>
    </citation>
    <scope>FUNCTION</scope>
    <scope>TISSUE SPECIFICITY</scope>
    <scope>INTERACTION WITH DECTIN1/CLEC7A</scope>
    <scope>SUBCELLULAR LOCATION</scope>
</reference>
<reference key="9">
    <citation type="journal article" date="2011" name="Mol. Cell. Biol.">
        <title>SCIMP, a transmembrane adapter protein involved in major histocompatibility complex class II signaling.</title>
        <authorList>
            <person name="Draber P."/>
            <person name="Vonkova I."/>
            <person name="Stepanek O."/>
            <person name="Hrdinka M."/>
            <person name="Kucova M."/>
            <person name="Skopcova T."/>
            <person name="Otahal P."/>
            <person name="Angelisova P."/>
            <person name="Horejsi V."/>
            <person name="Yeung M."/>
            <person name="Weiss A."/>
            <person name="Brdicka T."/>
        </authorList>
    </citation>
    <scope>INTERACTION WITH SCIMP</scope>
</reference>
<reference key="10">
    <citation type="journal article" date="2012" name="Cancer Cell">
        <title>Tetraspanin CD37 directly mediates transduction of survival and apoptotic signals.</title>
        <authorList>
            <person name="Lapalombella R."/>
            <person name="Yeh Y.Y."/>
            <person name="Wang L."/>
            <person name="Ramanunni A."/>
            <person name="Rafiq S."/>
            <person name="Jha S."/>
            <person name="Staubli J."/>
            <person name="Lucas D.M."/>
            <person name="Mani R."/>
            <person name="Herman S.E.M."/>
            <person name="Johnson A.J."/>
            <person name="Lozanski A."/>
            <person name="Andritsos L."/>
            <person name="Jones J."/>
            <person name="Flynn J.M."/>
            <person name="Lannutti B."/>
            <person name="Thompson P."/>
            <person name="Algate P."/>
            <person name="Stromatt S."/>
            <person name="Jarjoura D."/>
            <person name="Mo X."/>
            <person name="Wang D."/>
            <person name="Chen C.S."/>
            <person name="Lozanski G."/>
            <person name="Heerema N.A."/>
            <person name="Tridandapani S."/>
            <person name="Freitas M.A."/>
            <person name="Muthusamy N."/>
            <person name="Byrd J.C."/>
        </authorList>
    </citation>
    <scope>FUNCTION</scope>
    <scope>PHOSPHORYLATION</scope>
    <scope>MUTAGENESIS OF TYR-13 AND TYR-274</scope>
    <scope>SUBCELLULAR LOCATION</scope>
</reference>
<reference key="11">
    <citation type="journal article" date="2016" name="J. Clin. Invest.">
        <title>Tetraspanin CD37 protects against the development of B cell lymphoma.</title>
        <authorList>
            <person name="de Winde C.M."/>
            <person name="Veenbergen S."/>
            <person name="Young K.H."/>
            <person name="Xu-Monette Z.Y."/>
            <person name="Wang X.X."/>
            <person name="Xia Y."/>
            <person name="Jabbar K.J."/>
            <person name="van den Brand M."/>
            <person name="van der Schaaf A."/>
            <person name="Elfrink S."/>
            <person name="van Houdt I.S."/>
            <person name="Gijbels M.J."/>
            <person name="van de Loo F.A."/>
            <person name="Bennink M.B."/>
            <person name="Hebeda K.M."/>
            <person name="Groenen P.J."/>
            <person name="van Krieken J.H."/>
            <person name="Figdor C.G."/>
            <person name="van Spriel A.B."/>
        </authorList>
    </citation>
    <scope>FUNCTION</scope>
    <scope>INTERACTION WITH SOCS3</scope>
    <scope>SUBCELLULAR LOCATION</scope>
    <scope>TISSUE SPECIFICITY</scope>
</reference>
<gene>
    <name type="primary">CD37</name>
    <name type="synonym">TSPAN26</name>
</gene>